<accession>Q8I8I2</accession>
<reference evidence="12" key="1">
    <citation type="journal article" date="2003" name="Mol. Cell">
        <title>Aldolase forms a bridge between cell surface adhesins and the actin cytoskeleton in apicomplexan parasites.</title>
        <authorList>
            <person name="Jewett T.J."/>
            <person name="Sibley L.D."/>
        </authorList>
    </citation>
    <scope>NUCLEOTIDE SEQUENCE [MRNA]</scope>
    <scope>FUNCTION</scope>
    <scope>IDENTIFICATION IN A COMPLEX WITH MIC2 AND ACT1</scope>
    <scope>SUBCELLULAR LOCATION</scope>
    <source>
        <strain evidence="12">RH</strain>
    </source>
</reference>
<reference evidence="11" key="2">
    <citation type="journal article" date="2009" name="Cell Host Microbe">
        <title>Aldolase is essential for energy production and bridging adhesin-actin cytoskeletal interactions during parasite invasion of host cells.</title>
        <authorList>
            <person name="Starnes G.L."/>
            <person name="Coincon M."/>
            <person name="Sygusch J."/>
            <person name="Sibley L.D."/>
        </authorList>
    </citation>
    <scope>FUNCTION</scope>
    <scope>CATALYTIC ACTIVITY</scope>
    <scope>INTERACTION WITH MICRONEME PROTEIN MIC2 AND ACT1</scope>
    <scope>SUBCELLULAR LOCATION</scope>
    <scope>DISRUPTION PHENOTYPE</scope>
    <scope>MUTAGENESIS OF ASP-34; GLU-35; LYS-42; ARG-43; LYS-107; LYS-146; ARG-148; LYS-231; ARG-304 AND GLN-307</scope>
</reference>
<reference evidence="14" key="3">
    <citation type="journal article" date="2014" name="Acta Crystallogr. F Struct. Biol. Commun.">
        <title>Structure of Toxoplasma gondii fructose-1,6-bisphosphate aldolase.</title>
        <authorList>
            <person name="Boucher L.E."/>
            <person name="Bosch J."/>
        </authorList>
    </citation>
    <scope>X-RAY CRYSTALLOGRAPHY (2.00 ANGSTROMS) OF 8-340</scope>
    <scope>SUBUNIT</scope>
    <source>
        <strain evidence="8">ATCC 50611 / Me49</strain>
    </source>
</reference>
<reference evidence="13" key="4">
    <citation type="journal article" date="2015" name="J. Mol. Biol.">
        <title>Structural and functional divergence of the aldolase fold in Toxoplasma gondii.</title>
        <authorList>
            <person name="Tonkin M.L."/>
            <person name="Halavaty A.S."/>
            <person name="Ramaswamy R."/>
            <person name="Ruan J."/>
            <person name="Igarashi M."/>
            <person name="Ngo H.M."/>
            <person name="Boulanger M.J."/>
        </authorList>
    </citation>
    <scope>X-RAY CRYSTALLOGRAPHY (1.75 ANGSTROMS) OF 7-352</scope>
    <scope>FUNCTION</scope>
    <scope>CATALYTIC ACTIVITY</scope>
    <scope>SUBUNIT</scope>
</reference>
<reference evidence="15 16 17 18 19 20" key="5">
    <citation type="journal article" date="2017" name="J. Biol. Chem.">
        <title>Isomer activation controls stereospecificity of class I fructose-1,6-bisphosphate aldolases.</title>
        <authorList>
            <person name="Heron P.W."/>
            <person name="Sygusch J."/>
        </authorList>
    </citation>
    <scope>X-RAY CRYSTALLOGRAPHY (1.75 ANGSTROMS) IN COMPLEX WITH D-GLYCERALDEHYDE 3-PHOSPHATE; DIHYDROXYACETONE PHOSPHATE AND 1,6-DI-O-PHOSPHONO-D-FRUCTOSE</scope>
    <scope>FUNCTION</scope>
    <scope>CATALYTIC ACTIVITY</scope>
    <scope>BIOPHYSICOCHEMICAL PROPERTIES</scope>
    <scope>SUBUNIT</scope>
    <scope>ACTIVE SITE</scope>
</reference>
<proteinExistence type="evidence at protein level"/>
<organism evidence="12">
    <name type="scientific">Toxoplasma gondii</name>
    <dbReference type="NCBI Taxonomy" id="5811"/>
    <lineage>
        <taxon>Eukaryota</taxon>
        <taxon>Sar</taxon>
        <taxon>Alveolata</taxon>
        <taxon>Apicomplexa</taxon>
        <taxon>Conoidasida</taxon>
        <taxon>Coccidia</taxon>
        <taxon>Eucoccidiorida</taxon>
        <taxon>Eimeriorina</taxon>
        <taxon>Sarcocystidae</taxon>
        <taxon>Toxoplasma</taxon>
    </lineage>
</organism>
<feature type="chain" id="PRO_0000460491" description="Fructose-bisphosphate aldolase 1">
    <location>
        <begin position="1"/>
        <end position="363"/>
    </location>
</feature>
<feature type="active site" description="Proton acceptor" evidence="10">
    <location>
        <position position="189"/>
    </location>
</feature>
<feature type="active site" description="Schiff-base intermediate with dihydroxyacetone phosphate" evidence="6 16 17">
    <location>
        <position position="231"/>
    </location>
</feature>
<feature type="binding site" evidence="6 16 17 18">
    <location>
        <position position="34"/>
    </location>
    <ligand>
        <name>dihydroxyacetone phosphate</name>
        <dbReference type="ChEBI" id="CHEBI:57642"/>
    </ligand>
</feature>
<feature type="binding site" evidence="6 16 17 18">
    <location>
        <position position="36"/>
    </location>
    <ligand>
        <name>D-glyceraldehyde 3-phosphate</name>
        <dbReference type="ChEBI" id="CHEBI:59776"/>
    </ligand>
</feature>
<feature type="binding site" evidence="6 17 18">
    <location>
        <position position="39"/>
    </location>
    <ligand>
        <name>D-glyceraldehyde 3-phosphate</name>
        <dbReference type="ChEBI" id="CHEBI:59776"/>
    </ligand>
</feature>
<feature type="binding site" evidence="1">
    <location>
        <position position="43"/>
    </location>
    <ligand>
        <name>beta-D-fructose 1,6-bisphosphate</name>
        <dbReference type="ChEBI" id="CHEBI:32966"/>
    </ligand>
</feature>
<feature type="binding site" evidence="6 16 17">
    <location>
        <position position="107"/>
    </location>
    <ligand>
        <name>D-glyceraldehyde 3-phosphate</name>
        <dbReference type="ChEBI" id="CHEBI:59776"/>
    </ligand>
</feature>
<feature type="binding site" evidence="6 16">
    <location>
        <position position="146"/>
    </location>
    <ligand>
        <name>dihydroxyacetone phosphate</name>
        <dbReference type="ChEBI" id="CHEBI:57642"/>
    </ligand>
</feature>
<feature type="binding site" evidence="6 16 17">
    <location>
        <position position="189"/>
    </location>
    <ligand>
        <name>D-glyceraldehyde 3-phosphate</name>
        <dbReference type="ChEBI" id="CHEBI:59776"/>
    </ligand>
</feature>
<feature type="binding site" evidence="6 16 17">
    <location>
        <position position="231"/>
    </location>
    <ligand>
        <name>dihydroxyacetone phosphate</name>
        <dbReference type="ChEBI" id="CHEBI:57642"/>
    </ligand>
</feature>
<feature type="binding site" evidence="1">
    <location>
        <begin position="273"/>
        <end position="275"/>
    </location>
    <ligand>
        <name>beta-D-fructose 1,6-bisphosphate</name>
        <dbReference type="ChEBI" id="CHEBI:32966"/>
    </ligand>
</feature>
<feature type="binding site" evidence="6 16 17 18">
    <location>
        <position position="273"/>
    </location>
    <ligand>
        <name>dihydroxyacetone phosphate</name>
        <dbReference type="ChEBI" id="CHEBI:57642"/>
    </ligand>
</feature>
<feature type="binding site" evidence="6 16 17 18">
    <location>
        <position position="274"/>
    </location>
    <ligand>
        <name>dihydroxyacetone phosphate</name>
        <dbReference type="ChEBI" id="CHEBI:57642"/>
    </ligand>
</feature>
<feature type="binding site" evidence="1">
    <location>
        <position position="301"/>
    </location>
    <ligand>
        <name>beta-D-fructose 1,6-bisphosphate</name>
        <dbReference type="ChEBI" id="CHEBI:32966"/>
    </ligand>
</feature>
<feature type="binding site" evidence="6 16 17 18">
    <location>
        <position position="303"/>
    </location>
    <ligand>
        <name>dihydroxyacetone phosphate</name>
        <dbReference type="ChEBI" id="CHEBI:57642"/>
    </ligand>
</feature>
<feature type="binding site" evidence="1">
    <location>
        <position position="304"/>
    </location>
    <ligand>
        <name>beta-D-fructose 1,6-bisphosphate</name>
        <dbReference type="ChEBI" id="CHEBI:32966"/>
    </ligand>
</feature>
<feature type="binding site" evidence="6 16 17 18">
    <location>
        <position position="304"/>
    </location>
    <ligand>
        <name>dihydroxyacetone phosphate</name>
        <dbReference type="ChEBI" id="CHEBI:57642"/>
    </ligand>
</feature>
<feature type="mutagenesis site" description="Abolishes enzymatic activity. Reduces ACT1 binding. Slightly reduces MIC2 binding." evidence="3">
    <original>D</original>
    <variation>A</variation>
    <location>
        <position position="34"/>
    </location>
</feature>
<feature type="mutagenesis site" description="Reduces enzymatic activity. Enhances MIC2 binding." evidence="3">
    <original>E</original>
    <variation>A</variation>
    <location>
        <position position="35"/>
    </location>
</feature>
<feature type="mutagenesis site" description="Does not affect enzymatic activity. Reduces ACT1 binding. Reduces MIC2 binding. Abolishes enzymatic activity and reduces MIC2 binding; when associated with A-43." evidence="3">
    <original>K</original>
    <variation>A</variation>
    <location>
        <position position="42"/>
    </location>
</feature>
<feature type="mutagenesis site" description="Does not affect enzymatic activity. Reduces MIC2 binding. Reduces enzymatic activity, ACT1 binding and MIC2 binding; when associated with G-43." evidence="3">
    <original>K</original>
    <variation>E</variation>
    <location>
        <position position="42"/>
    </location>
</feature>
<feature type="mutagenesis site" description="Does not affect enzymatic activity. Reduces ACT1 binding. Reduces MIC2 binding. Abolishes enzymatic activity and reduces MIC2 binding; when associated with A-42." evidence="3">
    <original>R</original>
    <variation>A</variation>
    <location>
        <position position="43"/>
    </location>
</feature>
<feature type="mutagenesis site" description="Abolishes enzymatic activity. Reduces MIC2 binding." evidence="3">
    <original>R</original>
    <variation>D</variation>
    <location>
        <position position="43"/>
    </location>
</feature>
<feature type="mutagenesis site" description="Reduces enzymatic activity, ACT1 binding and MIC2 binding; when associated with E-42.">
    <original>R</original>
    <variation>G</variation>
    <location>
        <position position="43"/>
    </location>
</feature>
<feature type="mutagenesis site" description="Abolishes enzymatic activity. Reduces MIC2 binding." evidence="3">
    <original>K</original>
    <variation>A</variation>
    <location>
        <position position="107"/>
    </location>
</feature>
<feature type="mutagenesis site" description="Abolishes enzymatic activity. Reduces MIC2 binding." evidence="3">
    <original>K</original>
    <variation>A</variation>
    <location>
        <position position="146"/>
    </location>
</feature>
<feature type="mutagenesis site" description="Abolishes enzymatic activity. Reduces ACT1 binding. Reduces MIC2 binding." evidence="3">
    <original>R</original>
    <variation>A</variation>
    <location>
        <position position="148"/>
    </location>
</feature>
<feature type="mutagenesis site" description="Abolishes enzymatic activity. Reduces MIC2 binding." evidence="3">
    <original>K</original>
    <variation>A</variation>
    <location>
        <position position="231"/>
    </location>
</feature>
<feature type="mutagenesis site" description="Abolishes enzymatic activity. Reduces MIC2 binding." evidence="3">
    <original>R</original>
    <variation>A</variation>
    <location>
        <position position="304"/>
    </location>
</feature>
<feature type="mutagenesis site" description="Abolishes enzymatic activity. Reduces MIC2 binding." evidence="3">
    <original>Q</original>
    <variation>F</variation>
    <location>
        <position position="307"/>
    </location>
</feature>
<feature type="mutagenesis site" description="Does not affect enzymatic activity. Does not affect MIC2 binding." evidence="3">
    <original>Q</original>
    <variation>G</variation>
    <location>
        <position position="307"/>
    </location>
</feature>
<feature type="helix" evidence="21">
    <location>
        <begin position="10"/>
        <end position="23"/>
    </location>
</feature>
<feature type="strand" evidence="21">
    <location>
        <begin position="29"/>
        <end position="33"/>
    </location>
</feature>
<feature type="helix" evidence="21">
    <location>
        <begin position="37"/>
        <end position="46"/>
    </location>
</feature>
<feature type="helix" evidence="21">
    <location>
        <begin position="53"/>
        <end position="64"/>
    </location>
</feature>
<feature type="helix" evidence="21">
    <location>
        <begin position="69"/>
        <end position="71"/>
    </location>
</feature>
<feature type="strand" evidence="21">
    <location>
        <begin position="73"/>
        <end position="78"/>
    </location>
</feature>
<feature type="helix" evidence="21">
    <location>
        <begin position="80"/>
        <end position="83"/>
    </location>
</feature>
<feature type="helix" evidence="21">
    <location>
        <begin position="93"/>
        <end position="99"/>
    </location>
</feature>
<feature type="strand" evidence="21">
    <location>
        <begin position="103"/>
        <end position="107"/>
    </location>
</feature>
<feature type="strand" evidence="21">
    <location>
        <begin position="112"/>
        <end position="114"/>
    </location>
</feature>
<feature type="strand" evidence="21">
    <location>
        <begin position="118"/>
        <end position="120"/>
    </location>
</feature>
<feature type="strand" evidence="21">
    <location>
        <begin position="122"/>
        <end position="124"/>
    </location>
</feature>
<feature type="helix" evidence="21">
    <location>
        <begin position="130"/>
        <end position="139"/>
    </location>
</feature>
<feature type="strand" evidence="21">
    <location>
        <begin position="144"/>
        <end position="151"/>
    </location>
</feature>
<feature type="helix" evidence="21">
    <location>
        <begin position="155"/>
        <end position="157"/>
    </location>
</feature>
<feature type="helix" evidence="21">
    <location>
        <begin position="162"/>
        <end position="181"/>
    </location>
</feature>
<feature type="strand" evidence="21">
    <location>
        <begin position="185"/>
        <end position="192"/>
    </location>
</feature>
<feature type="helix" evidence="21">
    <location>
        <begin position="200"/>
        <end position="220"/>
    </location>
</feature>
<feature type="helix" evidence="21">
    <location>
        <begin position="225"/>
        <end position="227"/>
    </location>
</feature>
<feature type="strand" evidence="21">
    <location>
        <begin position="241"/>
        <end position="243"/>
    </location>
</feature>
<feature type="helix" evidence="21">
    <location>
        <begin position="247"/>
        <end position="259"/>
    </location>
</feature>
<feature type="strand" evidence="21">
    <location>
        <begin position="268"/>
        <end position="271"/>
    </location>
</feature>
<feature type="helix" evidence="21">
    <location>
        <begin position="278"/>
        <end position="290"/>
    </location>
</feature>
<feature type="strand" evidence="21">
    <location>
        <begin position="295"/>
        <end position="303"/>
    </location>
</feature>
<feature type="helix" evidence="21">
    <location>
        <begin position="304"/>
        <end position="314"/>
    </location>
</feature>
<feature type="helix" evidence="21">
    <location>
        <begin position="318"/>
        <end position="320"/>
    </location>
</feature>
<feature type="helix" evidence="21">
    <location>
        <begin position="321"/>
        <end position="339"/>
    </location>
</feature>
<name>ALF1_TOXGO</name>
<sequence length="363" mass="39097">MSGYGLPISQEVAKELAENARKIAAPGKGILAADESTGTIKKRFDSIGVENTEANRAFYRDLLFSTKGLGQYISGAILFEETLYQKSPSGVPMVDLLKAEGIIPGIKVDKGLETLPLTDDEKATMGLDGLSERCKKYYEAGARFAKWRAVLSIDPAKGKPTNLSITEVAHGLARYAAICQANRLVPIVEPEILTDGSHDITVCAEVTERVLAAVFKALNDHHVLLEGALLKPNMVTHGSDCPKPASHEEIAFYTVRSLKRTVPPALPGVMFLSGGQSEEDASLNLNEMNKMGPHPFQLSFSYGRALQASCLKAWKGVPENKAKAQQVLMERARANGEAQLGKYGGGAGGALAASSLFEKRYVY</sequence>
<protein>
    <recommendedName>
        <fullName evidence="9">Fructose-bisphosphate aldolase 1</fullName>
        <shortName evidence="10">TgALD</shortName>
        <shortName evidence="7 9">TgALD1</shortName>
        <shortName evidence="8">TgAldolase</shortName>
        <ecNumber evidence="3 5 6">4.1.2.13</ecNumber>
    </recommendedName>
</protein>
<keyword id="KW-0002">3D-structure</keyword>
<keyword id="KW-0009">Actin-binding</keyword>
<keyword id="KW-0963">Cytoplasm</keyword>
<keyword id="KW-0324">Glycolysis</keyword>
<keyword id="KW-0456">Lyase</keyword>
<keyword id="KW-0704">Schiff base</keyword>
<dbReference type="EC" id="4.1.2.13" evidence="3 5 6"/>
<dbReference type="EMBL" id="AY150663">
    <property type="protein sequence ID" value="AAN75043.1"/>
    <property type="molecule type" value="mRNA"/>
</dbReference>
<dbReference type="PDB" id="4D2J">
    <property type="method" value="X-ray"/>
    <property type="resolution" value="1.75 A"/>
    <property type="chains" value="A=7-352"/>
</dbReference>
<dbReference type="PDB" id="4TU1">
    <property type="method" value="X-ray"/>
    <property type="resolution" value="2.00 A"/>
    <property type="chains" value="A/B/C/D=8-340"/>
</dbReference>
<dbReference type="PDB" id="5TJS">
    <property type="method" value="X-ray"/>
    <property type="resolution" value="1.78 A"/>
    <property type="chains" value="A=1-363"/>
</dbReference>
<dbReference type="PDB" id="5TK3">
    <property type="method" value="X-ray"/>
    <property type="resolution" value="1.83 A"/>
    <property type="chains" value="A=1-363"/>
</dbReference>
<dbReference type="PDB" id="5TKC">
    <property type="method" value="X-ray"/>
    <property type="resolution" value="1.78 A"/>
    <property type="chains" value="A=1-363"/>
</dbReference>
<dbReference type="PDB" id="5TKL">
    <property type="method" value="X-ray"/>
    <property type="resolution" value="1.75 A"/>
    <property type="chains" value="A=1-363"/>
</dbReference>
<dbReference type="PDB" id="5TKN">
    <property type="method" value="X-ray"/>
    <property type="resolution" value="1.92 A"/>
    <property type="chains" value="A=1-363"/>
</dbReference>
<dbReference type="PDB" id="5TKP">
    <property type="method" value="X-ray"/>
    <property type="resolution" value="2.09 A"/>
    <property type="chains" value="A=1-363"/>
</dbReference>
<dbReference type="PDBsum" id="4D2J"/>
<dbReference type="PDBsum" id="4TU1"/>
<dbReference type="PDBsum" id="5TJS"/>
<dbReference type="PDBsum" id="5TK3"/>
<dbReference type="PDBsum" id="5TKC"/>
<dbReference type="PDBsum" id="5TKL"/>
<dbReference type="PDBsum" id="5TKN"/>
<dbReference type="PDBsum" id="5TKP"/>
<dbReference type="SMR" id="Q8I8I2"/>
<dbReference type="VEuPathDB" id="ToxoDB:TGARI_236040"/>
<dbReference type="VEuPathDB" id="ToxoDB:TGCAST_321900"/>
<dbReference type="VEuPathDB" id="ToxoDB:TGCOUG_236040"/>
<dbReference type="VEuPathDB" id="ToxoDB:TGDOM2_236040A"/>
<dbReference type="VEuPathDB" id="ToxoDB:TGDOM2_236040B"/>
<dbReference type="VEuPathDB" id="ToxoDB:TGFOU_236040A"/>
<dbReference type="VEuPathDB" id="ToxoDB:TGFOU_236050B"/>
<dbReference type="VEuPathDB" id="ToxoDB:TGGT1_236040"/>
<dbReference type="VEuPathDB" id="ToxoDB:TGMAS_236040"/>
<dbReference type="VEuPathDB" id="ToxoDB:TGMAS_236050B"/>
<dbReference type="VEuPathDB" id="ToxoDB:TGME49_236040"/>
<dbReference type="VEuPathDB" id="ToxoDB:TGP89_236040A"/>
<dbReference type="VEuPathDB" id="ToxoDB:TGP89_236050B"/>
<dbReference type="VEuPathDB" id="ToxoDB:TGPRC2_236040"/>
<dbReference type="VEuPathDB" id="ToxoDB:TGPRC2_321900"/>
<dbReference type="VEuPathDB" id="ToxoDB:TGRH88_041530"/>
<dbReference type="VEuPathDB" id="ToxoDB:TGRUB_236040"/>
<dbReference type="VEuPathDB" id="ToxoDB:TGVAND_236040"/>
<dbReference type="VEuPathDB" id="ToxoDB:TGVEG_236040"/>
<dbReference type="BRENDA" id="4.1.2.13">
    <property type="organism ID" value="6411"/>
</dbReference>
<dbReference type="UniPathway" id="UPA00109">
    <property type="reaction ID" value="UER00183"/>
</dbReference>
<dbReference type="GO" id="GO:0005737">
    <property type="term" value="C:cytoplasm"/>
    <property type="evidence" value="ECO:0007669"/>
    <property type="project" value="UniProtKB-SubCell"/>
</dbReference>
<dbReference type="GO" id="GO:0003779">
    <property type="term" value="F:actin binding"/>
    <property type="evidence" value="ECO:0007669"/>
    <property type="project" value="UniProtKB-KW"/>
</dbReference>
<dbReference type="GO" id="GO:0004332">
    <property type="term" value="F:fructose-bisphosphate aldolase activity"/>
    <property type="evidence" value="ECO:0007669"/>
    <property type="project" value="UniProtKB-EC"/>
</dbReference>
<dbReference type="GO" id="GO:0006096">
    <property type="term" value="P:glycolytic process"/>
    <property type="evidence" value="ECO:0007669"/>
    <property type="project" value="UniProtKB-UniPathway"/>
</dbReference>
<dbReference type="CDD" id="cd00948">
    <property type="entry name" value="FBP_aldolase_I_a"/>
    <property type="match status" value="1"/>
</dbReference>
<dbReference type="FunFam" id="3.20.20.70:FF:000187">
    <property type="entry name" value="Fructose-bisphosphate aldolase"/>
    <property type="match status" value="1"/>
</dbReference>
<dbReference type="Gene3D" id="3.20.20.70">
    <property type="entry name" value="Aldolase class I"/>
    <property type="match status" value="1"/>
</dbReference>
<dbReference type="InterPro" id="IPR029768">
    <property type="entry name" value="Aldolase_I_AS"/>
</dbReference>
<dbReference type="InterPro" id="IPR013785">
    <property type="entry name" value="Aldolase_TIM"/>
</dbReference>
<dbReference type="InterPro" id="IPR000741">
    <property type="entry name" value="FBA_I"/>
</dbReference>
<dbReference type="NCBIfam" id="NF033379">
    <property type="entry name" value="FrucBisAld_I"/>
    <property type="match status" value="1"/>
</dbReference>
<dbReference type="PANTHER" id="PTHR11627">
    <property type="entry name" value="FRUCTOSE-BISPHOSPHATE ALDOLASE"/>
    <property type="match status" value="1"/>
</dbReference>
<dbReference type="Pfam" id="PF00274">
    <property type="entry name" value="Glycolytic"/>
    <property type="match status" value="1"/>
</dbReference>
<dbReference type="SUPFAM" id="SSF51569">
    <property type="entry name" value="Aldolase"/>
    <property type="match status" value="1"/>
</dbReference>
<dbReference type="PROSITE" id="PS00158">
    <property type="entry name" value="ALDOLASE_CLASS_I"/>
    <property type="match status" value="1"/>
</dbReference>
<gene>
    <name evidence="12" type="primary">ald-1</name>
</gene>
<comment type="function">
    <text evidence="2 3 5 6">Plays a key role in glycolysis by catalyzing the cleavage of fructose 1,6-bisphosphate into dihydroxyacetone phosphate and glyceraldehyde 3-phosphate (PubMed:19380114, PubMed:25284756, PubMed:28972169). Forms a bridge between cell surface adhesins and the actin cytoskeleton (PubMed:12718875, PubMed:19380114). Required for parasite invasion of host cells (PubMed:19380114).</text>
</comment>
<comment type="catalytic activity">
    <reaction evidence="3 5 6">
        <text>beta-D-fructose 1,6-bisphosphate = D-glyceraldehyde 3-phosphate + dihydroxyacetone phosphate</text>
        <dbReference type="Rhea" id="RHEA:14729"/>
        <dbReference type="ChEBI" id="CHEBI:32966"/>
        <dbReference type="ChEBI" id="CHEBI:57642"/>
        <dbReference type="ChEBI" id="CHEBI:59776"/>
        <dbReference type="EC" id="4.1.2.13"/>
    </reaction>
</comment>
<comment type="biophysicochemical properties">
    <kinetics>
        <KM evidence="6">4.05 uM for fructose-1,6-bisphosphate</KM>
        <text evidence="6">kcat is 7.09 sec(-1) with fructose-1,6- bisphosphate as substrate.</text>
    </kinetics>
    <phDependence>
        <text evidence="6">Optimum pH is 6.0-8.0.</text>
    </phDependence>
</comment>
<comment type="pathway">
    <text evidence="11">Carbohydrate degradation; glycolysis; D-glyceraldehyde 3-phosphate and glycerone phosphate from D-glucose: step 4/4.</text>
</comment>
<comment type="subunit">
    <text evidence="2 3 4 5 6">Homotetramer (PubMed:25195889, PubMed:25284756, PubMed:28972169). Component of a complex, at least composed of ald-1, microneme protein MIC2 and ACT1 (PubMed:12718875). Interacts with microneme protein MIC2 (via cytoplasmic tail) (PubMed:19380114). Interacts with ACT1 (F-actin) (PubMed:19380114).</text>
</comment>
<comment type="subcellular location">
    <subcellularLocation>
        <location evidence="2 3">Cytoplasm</location>
    </subcellularLocation>
    <text evidence="2 3">Localizes in the cytosol, concentrated at the anterior end of the parasite, and gets deposited in the trails during gliding motility.</text>
</comment>
<comment type="disruption phenotype">
    <text evidence="3">Conditional knockdown results in growth defects (PubMed:19380114). Decreased intracellular ATP levels (PubMed:19380114). Decreased number of trails produced during parasite motility (PubMed:19380114). Decreased ability of parasites to attach to and invade host cells (PubMed:19380114).</text>
</comment>
<comment type="similarity">
    <text evidence="11">Belongs to the class I fructose-bisphosphate aldolase family.</text>
</comment>
<evidence type="ECO:0000250" key="1">
    <source>
        <dbReference type="UniProtKB" id="P00883"/>
    </source>
</evidence>
<evidence type="ECO:0000269" key="2">
    <source>
    </source>
</evidence>
<evidence type="ECO:0000269" key="3">
    <source>
    </source>
</evidence>
<evidence type="ECO:0000269" key="4">
    <source>
    </source>
</evidence>
<evidence type="ECO:0000269" key="5">
    <source>
    </source>
</evidence>
<evidence type="ECO:0000269" key="6">
    <source>
    </source>
</evidence>
<evidence type="ECO:0000303" key="7">
    <source>
    </source>
</evidence>
<evidence type="ECO:0000303" key="8">
    <source>
    </source>
</evidence>
<evidence type="ECO:0000303" key="9">
    <source>
    </source>
</evidence>
<evidence type="ECO:0000303" key="10">
    <source>
    </source>
</evidence>
<evidence type="ECO:0000305" key="11"/>
<evidence type="ECO:0000312" key="12">
    <source>
        <dbReference type="EMBL" id="AAN75043.1"/>
    </source>
</evidence>
<evidence type="ECO:0007744" key="13">
    <source>
        <dbReference type="PDB" id="4D2J"/>
    </source>
</evidence>
<evidence type="ECO:0007744" key="14">
    <source>
        <dbReference type="PDB" id="4TU1"/>
    </source>
</evidence>
<evidence type="ECO:0007744" key="15">
    <source>
        <dbReference type="PDB" id="5TJS"/>
    </source>
</evidence>
<evidence type="ECO:0007744" key="16">
    <source>
        <dbReference type="PDB" id="5TK3"/>
    </source>
</evidence>
<evidence type="ECO:0007744" key="17">
    <source>
        <dbReference type="PDB" id="5TKC"/>
    </source>
</evidence>
<evidence type="ECO:0007744" key="18">
    <source>
        <dbReference type="PDB" id="5TKL"/>
    </source>
</evidence>
<evidence type="ECO:0007744" key="19">
    <source>
        <dbReference type="PDB" id="5TKN"/>
    </source>
</evidence>
<evidence type="ECO:0007744" key="20">
    <source>
        <dbReference type="PDB" id="5TKP"/>
    </source>
</evidence>
<evidence type="ECO:0007829" key="21">
    <source>
        <dbReference type="PDB" id="4D2J"/>
    </source>
</evidence>